<feature type="chain" id="PRO_1000092994" description="Peptidyl-tRNA hydrolase">
    <location>
        <begin position="1"/>
        <end position="189"/>
    </location>
</feature>
<feature type="active site" description="Proton acceptor" evidence="1">
    <location>
        <position position="20"/>
    </location>
</feature>
<feature type="binding site" evidence="1">
    <location>
        <position position="15"/>
    </location>
    <ligand>
        <name>tRNA</name>
        <dbReference type="ChEBI" id="CHEBI:17843"/>
    </ligand>
</feature>
<feature type="binding site" evidence="1">
    <location>
        <position position="66"/>
    </location>
    <ligand>
        <name>tRNA</name>
        <dbReference type="ChEBI" id="CHEBI:17843"/>
    </ligand>
</feature>
<feature type="binding site" evidence="1">
    <location>
        <position position="68"/>
    </location>
    <ligand>
        <name>tRNA</name>
        <dbReference type="ChEBI" id="CHEBI:17843"/>
    </ligand>
</feature>
<feature type="binding site" evidence="1">
    <location>
        <position position="114"/>
    </location>
    <ligand>
        <name>tRNA</name>
        <dbReference type="ChEBI" id="CHEBI:17843"/>
    </ligand>
</feature>
<feature type="site" description="Discriminates between blocked and unblocked aminoacyl-tRNA" evidence="1">
    <location>
        <position position="10"/>
    </location>
</feature>
<feature type="site" description="Stabilizes the basic form of H active site to accept a proton" evidence="1">
    <location>
        <position position="93"/>
    </location>
</feature>
<feature type="strand" evidence="5">
    <location>
        <begin position="2"/>
        <end position="7"/>
    </location>
</feature>
<feature type="helix" evidence="5">
    <location>
        <begin position="13"/>
        <end position="15"/>
    </location>
</feature>
<feature type="helix" evidence="5">
    <location>
        <begin position="19"/>
        <end position="21"/>
    </location>
</feature>
<feature type="helix" evidence="5">
    <location>
        <begin position="22"/>
        <end position="33"/>
    </location>
</feature>
<feature type="strand" evidence="5">
    <location>
        <begin position="42"/>
        <end position="53"/>
    </location>
</feature>
<feature type="strand" evidence="5">
    <location>
        <begin position="56"/>
        <end position="63"/>
    </location>
</feature>
<feature type="helix" evidence="5">
    <location>
        <begin position="67"/>
        <end position="69"/>
    </location>
</feature>
<feature type="helix" evidence="5">
    <location>
        <begin position="70"/>
        <end position="80"/>
    </location>
</feature>
<feature type="helix" evidence="5">
    <location>
        <begin position="85"/>
        <end position="87"/>
    </location>
</feature>
<feature type="strand" evidence="5">
    <location>
        <begin position="88"/>
        <end position="97"/>
    </location>
</feature>
<feature type="strand" evidence="5">
    <location>
        <begin position="102"/>
        <end position="106"/>
    </location>
</feature>
<feature type="helix" evidence="5">
    <location>
        <begin position="114"/>
        <end position="123"/>
    </location>
</feature>
<feature type="strand" evidence="5">
    <location>
        <begin position="128"/>
        <end position="134"/>
    </location>
</feature>
<feature type="helix" evidence="5">
    <location>
        <begin position="144"/>
        <end position="148"/>
    </location>
</feature>
<feature type="helix" evidence="5">
    <location>
        <begin position="154"/>
        <end position="156"/>
    </location>
</feature>
<feature type="helix" evidence="5">
    <location>
        <begin position="157"/>
        <end position="177"/>
    </location>
</feature>
<feature type="helix" evidence="5">
    <location>
        <begin position="180"/>
        <end position="187"/>
    </location>
</feature>
<accession>B5XIP6</accession>
<protein>
    <recommendedName>
        <fullName evidence="1 3">Peptidyl-tRNA hydrolase</fullName>
        <shortName evidence="1">Pth</shortName>
        <ecNumber evidence="1">3.1.1.29</ecNumber>
    </recommendedName>
    <alternativeName>
        <fullName evidence="3">SpPth</fullName>
    </alternativeName>
</protein>
<sequence>MVKMIVGLGNPGSKYEKTKHNIGFMAIDNIVKNLDVTFTDDKNFKAQIGSTFINHEKVYFVKPTTFMNNSGIAVKALLTYYNIDITDLIVIYDDLDMEVSKLRLRSKGSAGGHNGIKSIIAHIGTQEFNRIKVGIGRPLKGMTVINHVMGQFNTEDNIAISLTLDRVVNAVKFYLQENDFEKTMQKFNG</sequence>
<evidence type="ECO:0000255" key="1">
    <source>
        <dbReference type="HAMAP-Rule" id="MF_00083"/>
    </source>
</evidence>
<evidence type="ECO:0000269" key="2">
    <source>
    </source>
</evidence>
<evidence type="ECO:0000303" key="3">
    <source>
    </source>
</evidence>
<evidence type="ECO:0007744" key="4">
    <source>
        <dbReference type="PDB" id="4QT4"/>
    </source>
</evidence>
<evidence type="ECO:0007829" key="5">
    <source>
        <dbReference type="PDB" id="4QT4"/>
    </source>
</evidence>
<proteinExistence type="evidence at protein level"/>
<gene>
    <name evidence="1" type="primary">pth</name>
    <name type="ordered locus">Spy49_0005</name>
</gene>
<comment type="function">
    <text evidence="1">Hydrolyzes ribosome-free peptidyl-tRNAs (with 1 or more amino acids incorporated), which drop off the ribosome during protein synthesis, or as a result of ribosome stalling.</text>
</comment>
<comment type="function">
    <text evidence="1">Catalyzes the release of premature peptidyl moieties from peptidyl-tRNA molecules trapped in stalled 50S ribosomal subunits, and thus maintains levels of free tRNAs and 50S ribosomes.</text>
</comment>
<comment type="catalytic activity">
    <reaction evidence="1">
        <text>an N-acyl-L-alpha-aminoacyl-tRNA + H2O = an N-acyl-L-amino acid + a tRNA + H(+)</text>
        <dbReference type="Rhea" id="RHEA:54448"/>
        <dbReference type="Rhea" id="RHEA-COMP:10123"/>
        <dbReference type="Rhea" id="RHEA-COMP:13883"/>
        <dbReference type="ChEBI" id="CHEBI:15377"/>
        <dbReference type="ChEBI" id="CHEBI:15378"/>
        <dbReference type="ChEBI" id="CHEBI:59874"/>
        <dbReference type="ChEBI" id="CHEBI:78442"/>
        <dbReference type="ChEBI" id="CHEBI:138191"/>
        <dbReference type="EC" id="3.1.1.29"/>
    </reaction>
</comment>
<comment type="subunit">
    <text evidence="1 2">Monomer.</text>
</comment>
<comment type="subcellular location">
    <subcellularLocation>
        <location evidence="1">Cytoplasm</location>
    </subcellularLocation>
</comment>
<comment type="similarity">
    <text evidence="1">Belongs to the PTH family.</text>
</comment>
<name>PTH_STRPZ</name>
<dbReference type="EC" id="3.1.1.29" evidence="1"/>
<dbReference type="EMBL" id="CP000829">
    <property type="protein sequence ID" value="ACI60369.1"/>
    <property type="molecule type" value="Genomic_DNA"/>
</dbReference>
<dbReference type="PDB" id="4QT4">
    <property type="method" value="X-ray"/>
    <property type="resolution" value="2.19 A"/>
    <property type="chains" value="A/B=1-189"/>
</dbReference>
<dbReference type="PDBsum" id="4QT4"/>
<dbReference type="SMR" id="B5XIP6"/>
<dbReference type="KEGG" id="soz:Spy49_0005"/>
<dbReference type="HOGENOM" id="CLU_062456_4_1_9"/>
<dbReference type="EvolutionaryTrace" id="B5XIP6"/>
<dbReference type="Proteomes" id="UP000001039">
    <property type="component" value="Chromosome"/>
</dbReference>
<dbReference type="GO" id="GO:0005737">
    <property type="term" value="C:cytoplasm"/>
    <property type="evidence" value="ECO:0007669"/>
    <property type="project" value="UniProtKB-SubCell"/>
</dbReference>
<dbReference type="GO" id="GO:0004045">
    <property type="term" value="F:peptidyl-tRNA hydrolase activity"/>
    <property type="evidence" value="ECO:0007669"/>
    <property type="project" value="UniProtKB-UniRule"/>
</dbReference>
<dbReference type="GO" id="GO:0000049">
    <property type="term" value="F:tRNA binding"/>
    <property type="evidence" value="ECO:0007669"/>
    <property type="project" value="UniProtKB-UniRule"/>
</dbReference>
<dbReference type="GO" id="GO:0006515">
    <property type="term" value="P:protein quality control for misfolded or incompletely synthesized proteins"/>
    <property type="evidence" value="ECO:0007669"/>
    <property type="project" value="UniProtKB-UniRule"/>
</dbReference>
<dbReference type="GO" id="GO:0072344">
    <property type="term" value="P:rescue of stalled ribosome"/>
    <property type="evidence" value="ECO:0007669"/>
    <property type="project" value="UniProtKB-UniRule"/>
</dbReference>
<dbReference type="CDD" id="cd00462">
    <property type="entry name" value="PTH"/>
    <property type="match status" value="1"/>
</dbReference>
<dbReference type="FunFam" id="3.40.50.1470:FF:000001">
    <property type="entry name" value="Peptidyl-tRNA hydrolase"/>
    <property type="match status" value="1"/>
</dbReference>
<dbReference type="Gene3D" id="3.40.50.1470">
    <property type="entry name" value="Peptidyl-tRNA hydrolase"/>
    <property type="match status" value="1"/>
</dbReference>
<dbReference type="HAMAP" id="MF_00083">
    <property type="entry name" value="Pept_tRNA_hydro_bact"/>
    <property type="match status" value="1"/>
</dbReference>
<dbReference type="InterPro" id="IPR001328">
    <property type="entry name" value="Pept_tRNA_hydro"/>
</dbReference>
<dbReference type="InterPro" id="IPR018171">
    <property type="entry name" value="Pept_tRNA_hydro_CS"/>
</dbReference>
<dbReference type="InterPro" id="IPR036416">
    <property type="entry name" value="Pept_tRNA_hydro_sf"/>
</dbReference>
<dbReference type="NCBIfam" id="TIGR00447">
    <property type="entry name" value="pth"/>
    <property type="match status" value="1"/>
</dbReference>
<dbReference type="PANTHER" id="PTHR17224">
    <property type="entry name" value="PEPTIDYL-TRNA HYDROLASE"/>
    <property type="match status" value="1"/>
</dbReference>
<dbReference type="PANTHER" id="PTHR17224:SF1">
    <property type="entry name" value="PEPTIDYL-TRNA HYDROLASE"/>
    <property type="match status" value="1"/>
</dbReference>
<dbReference type="Pfam" id="PF01195">
    <property type="entry name" value="Pept_tRNA_hydro"/>
    <property type="match status" value="1"/>
</dbReference>
<dbReference type="SUPFAM" id="SSF53178">
    <property type="entry name" value="Peptidyl-tRNA hydrolase-like"/>
    <property type="match status" value="1"/>
</dbReference>
<dbReference type="PROSITE" id="PS01195">
    <property type="entry name" value="PEPT_TRNA_HYDROL_1"/>
    <property type="match status" value="1"/>
</dbReference>
<dbReference type="PROSITE" id="PS01196">
    <property type="entry name" value="PEPT_TRNA_HYDROL_2"/>
    <property type="match status" value="1"/>
</dbReference>
<organism>
    <name type="scientific">Streptococcus pyogenes serotype M49 (strain NZ131)</name>
    <dbReference type="NCBI Taxonomy" id="471876"/>
    <lineage>
        <taxon>Bacteria</taxon>
        <taxon>Bacillati</taxon>
        <taxon>Bacillota</taxon>
        <taxon>Bacilli</taxon>
        <taxon>Lactobacillales</taxon>
        <taxon>Streptococcaceae</taxon>
        <taxon>Streptococcus</taxon>
    </lineage>
</organism>
<reference key="1">
    <citation type="journal article" date="2008" name="J. Bacteriol.">
        <title>Genome sequence of a nephritogenic and highly transformable M49 strain of Streptococcus pyogenes.</title>
        <authorList>
            <person name="McShan W.M."/>
            <person name="Ferretti J.J."/>
            <person name="Karasawa T."/>
            <person name="Suvorov A.N."/>
            <person name="Lin S."/>
            <person name="Qin B."/>
            <person name="Jia H."/>
            <person name="Kenton S."/>
            <person name="Najar F."/>
            <person name="Wu H."/>
            <person name="Scott J."/>
            <person name="Roe B.A."/>
            <person name="Savic D.J."/>
        </authorList>
    </citation>
    <scope>NUCLEOTIDE SEQUENCE [LARGE SCALE GENOMIC DNA]</scope>
    <source>
        <strain>NZ131</strain>
    </source>
</reference>
<reference evidence="4" key="2">
    <citation type="journal article" date="2014" name="FEBS Open Bio">
        <title>Crystal structure of peptidyl-tRNA hydrolase from a Gram-positive bacterium, Streptococcus pyogenes at 2.19 A resolution shows the closed structure of the substrate-binding cleft.</title>
        <authorList>
            <person name="Singh A."/>
            <person name="Gautam L."/>
            <person name="Sinha M."/>
            <person name="Bhushan A."/>
            <person name="Kaur P."/>
            <person name="Sharma S."/>
            <person name="Singh T.P."/>
        </authorList>
    </citation>
    <scope>X-RAY CRYSTALLOGRAPHY (2.19 ANGSTROMS)</scope>
    <scope>SUBUNIT</scope>
    <source>
        <strain>NCTC 3359 / MTCC 1924</strain>
    </source>
</reference>
<keyword id="KW-0002">3D-structure</keyword>
<keyword id="KW-0963">Cytoplasm</keyword>
<keyword id="KW-0378">Hydrolase</keyword>
<keyword id="KW-0694">RNA-binding</keyword>
<keyword id="KW-0820">tRNA-binding</keyword>